<comment type="function">
    <text evidence="1">Participates actively in the response to hyperosmotic and heat shock by preventing the aggregation of stress-denatured proteins, in association with DnaK and GrpE. It is the nucleotide exchange factor for DnaK and may function as a thermosensor. Unfolded proteins bind initially to DnaJ; upon interaction with the DnaJ-bound protein, DnaK hydrolyzes its bound ATP, resulting in the formation of a stable complex. GrpE releases ADP from DnaK; ATP binding to DnaK triggers the release of the substrate protein, thus completing the reaction cycle. Several rounds of ATP-dependent interactions between DnaJ, DnaK and GrpE are required for fully efficient folding.</text>
</comment>
<comment type="subunit">
    <text evidence="1">Homodimer.</text>
</comment>
<comment type="subcellular location">
    <subcellularLocation>
        <location evidence="1">Cytoplasm</location>
    </subcellularLocation>
</comment>
<comment type="similarity">
    <text evidence="1">Belongs to the GrpE family.</text>
</comment>
<feature type="chain" id="PRO_1000137631" description="Protein GrpE">
    <location>
        <begin position="1"/>
        <end position="171"/>
    </location>
</feature>
<feature type="region of interest" description="Disordered" evidence="2">
    <location>
        <begin position="1"/>
        <end position="22"/>
    </location>
</feature>
<keyword id="KW-0143">Chaperone</keyword>
<keyword id="KW-0963">Cytoplasm</keyword>
<keyword id="KW-0346">Stress response</keyword>
<protein>
    <recommendedName>
        <fullName evidence="1">Protein GrpE</fullName>
    </recommendedName>
    <alternativeName>
        <fullName evidence="1">HSP-70 cofactor</fullName>
    </alternativeName>
</protein>
<sequence length="171" mass="18594">MNHEHPDIESQQSAADAAAAAGVNDEVERLRAELDQVKADVLRERADLENQRKRVARDIEQARKFANEKLLGELLPVFDSLDAGLKAAGDDAHPLREGLELTYRQLLKVAGDNGLVLLDPTGQPFNPEHHQAISQVPTPGAAPGSVVTVFQKGYLLNERLLRPALVVVAAD</sequence>
<evidence type="ECO:0000255" key="1">
    <source>
        <dbReference type="HAMAP-Rule" id="MF_01151"/>
    </source>
</evidence>
<evidence type="ECO:0000256" key="2">
    <source>
        <dbReference type="SAM" id="MobiDB-lite"/>
    </source>
</evidence>
<name>GRPE_STRM5</name>
<reference key="1">
    <citation type="submission" date="2008-06" db="EMBL/GenBank/DDBJ databases">
        <title>Complete sequence of Stenotrophomonas maltophilia R551-3.</title>
        <authorList>
            <consortium name="US DOE Joint Genome Institute"/>
            <person name="Lucas S."/>
            <person name="Copeland A."/>
            <person name="Lapidus A."/>
            <person name="Glavina del Rio T."/>
            <person name="Dalin E."/>
            <person name="Tice H."/>
            <person name="Pitluck S."/>
            <person name="Chain P."/>
            <person name="Malfatti S."/>
            <person name="Shin M."/>
            <person name="Vergez L."/>
            <person name="Lang D."/>
            <person name="Schmutz J."/>
            <person name="Larimer F."/>
            <person name="Land M."/>
            <person name="Hauser L."/>
            <person name="Kyrpides N."/>
            <person name="Mikhailova N."/>
            <person name="Taghavi S."/>
            <person name="Monchy S."/>
            <person name="Newman L."/>
            <person name="Vangronsveld J."/>
            <person name="van der Lelie D."/>
            <person name="Richardson P."/>
        </authorList>
    </citation>
    <scope>NUCLEOTIDE SEQUENCE [LARGE SCALE GENOMIC DNA]</scope>
    <source>
        <strain>R551-3</strain>
    </source>
</reference>
<accession>B4SSQ5</accession>
<proteinExistence type="inferred from homology"/>
<dbReference type="EMBL" id="CP001111">
    <property type="protein sequence ID" value="ACF51304.1"/>
    <property type="molecule type" value="Genomic_DNA"/>
</dbReference>
<dbReference type="RefSeq" id="WP_004153267.1">
    <property type="nucleotide sequence ID" value="NC_011071.1"/>
</dbReference>
<dbReference type="SMR" id="B4SSQ5"/>
<dbReference type="STRING" id="391008.Smal_1599"/>
<dbReference type="KEGG" id="smt:Smal_1599"/>
<dbReference type="eggNOG" id="COG0576">
    <property type="taxonomic scope" value="Bacteria"/>
</dbReference>
<dbReference type="HOGENOM" id="CLU_057217_6_0_6"/>
<dbReference type="OrthoDB" id="9789811at2"/>
<dbReference type="Proteomes" id="UP000001867">
    <property type="component" value="Chromosome"/>
</dbReference>
<dbReference type="GO" id="GO:0005829">
    <property type="term" value="C:cytosol"/>
    <property type="evidence" value="ECO:0007669"/>
    <property type="project" value="TreeGrafter"/>
</dbReference>
<dbReference type="GO" id="GO:0000774">
    <property type="term" value="F:adenyl-nucleotide exchange factor activity"/>
    <property type="evidence" value="ECO:0007669"/>
    <property type="project" value="InterPro"/>
</dbReference>
<dbReference type="GO" id="GO:0042803">
    <property type="term" value="F:protein homodimerization activity"/>
    <property type="evidence" value="ECO:0007669"/>
    <property type="project" value="InterPro"/>
</dbReference>
<dbReference type="GO" id="GO:0051087">
    <property type="term" value="F:protein-folding chaperone binding"/>
    <property type="evidence" value="ECO:0007669"/>
    <property type="project" value="InterPro"/>
</dbReference>
<dbReference type="GO" id="GO:0051082">
    <property type="term" value="F:unfolded protein binding"/>
    <property type="evidence" value="ECO:0007669"/>
    <property type="project" value="TreeGrafter"/>
</dbReference>
<dbReference type="GO" id="GO:0006457">
    <property type="term" value="P:protein folding"/>
    <property type="evidence" value="ECO:0007669"/>
    <property type="project" value="InterPro"/>
</dbReference>
<dbReference type="CDD" id="cd00446">
    <property type="entry name" value="GrpE"/>
    <property type="match status" value="1"/>
</dbReference>
<dbReference type="FunFam" id="2.30.22.10:FF:000001">
    <property type="entry name" value="Protein GrpE"/>
    <property type="match status" value="1"/>
</dbReference>
<dbReference type="Gene3D" id="3.90.20.20">
    <property type="match status" value="1"/>
</dbReference>
<dbReference type="Gene3D" id="2.30.22.10">
    <property type="entry name" value="Head domain of nucleotide exchange factor GrpE"/>
    <property type="match status" value="1"/>
</dbReference>
<dbReference type="HAMAP" id="MF_01151">
    <property type="entry name" value="GrpE"/>
    <property type="match status" value="1"/>
</dbReference>
<dbReference type="InterPro" id="IPR000740">
    <property type="entry name" value="GrpE"/>
</dbReference>
<dbReference type="InterPro" id="IPR013805">
    <property type="entry name" value="GrpE_coiled_coil"/>
</dbReference>
<dbReference type="InterPro" id="IPR009012">
    <property type="entry name" value="GrpE_head"/>
</dbReference>
<dbReference type="NCBIfam" id="NF010738">
    <property type="entry name" value="PRK14140.1"/>
    <property type="match status" value="1"/>
</dbReference>
<dbReference type="NCBIfam" id="NF010745">
    <property type="entry name" value="PRK14147.1"/>
    <property type="match status" value="1"/>
</dbReference>
<dbReference type="PANTHER" id="PTHR21237">
    <property type="entry name" value="GRPE PROTEIN"/>
    <property type="match status" value="1"/>
</dbReference>
<dbReference type="PANTHER" id="PTHR21237:SF23">
    <property type="entry name" value="GRPE PROTEIN HOMOLOG, MITOCHONDRIAL"/>
    <property type="match status" value="1"/>
</dbReference>
<dbReference type="Pfam" id="PF01025">
    <property type="entry name" value="GrpE"/>
    <property type="match status" value="1"/>
</dbReference>
<dbReference type="PRINTS" id="PR00773">
    <property type="entry name" value="GRPEPROTEIN"/>
</dbReference>
<dbReference type="SUPFAM" id="SSF58014">
    <property type="entry name" value="Coiled-coil domain of nucleotide exchange factor GrpE"/>
    <property type="match status" value="1"/>
</dbReference>
<dbReference type="SUPFAM" id="SSF51064">
    <property type="entry name" value="Head domain of nucleotide exchange factor GrpE"/>
    <property type="match status" value="1"/>
</dbReference>
<dbReference type="PROSITE" id="PS01071">
    <property type="entry name" value="GRPE"/>
    <property type="match status" value="1"/>
</dbReference>
<gene>
    <name evidence="1" type="primary">grpE</name>
    <name type="ordered locus">Smal_1599</name>
</gene>
<organism>
    <name type="scientific">Stenotrophomonas maltophilia (strain R551-3)</name>
    <dbReference type="NCBI Taxonomy" id="391008"/>
    <lineage>
        <taxon>Bacteria</taxon>
        <taxon>Pseudomonadati</taxon>
        <taxon>Pseudomonadota</taxon>
        <taxon>Gammaproteobacteria</taxon>
        <taxon>Lysobacterales</taxon>
        <taxon>Lysobacteraceae</taxon>
        <taxon>Stenotrophomonas</taxon>
        <taxon>Stenotrophomonas maltophilia group</taxon>
    </lineage>
</organism>